<evidence type="ECO:0000269" key="1">
    <source>
    </source>
</evidence>
<evidence type="ECO:0000305" key="2"/>
<proteinExistence type="evidence at protein level"/>
<sequence length="365" mass="41921">MANKITTFLSGQTGKQISNIDLLNSIRTRASADYQADIPVLEGARINHATVPYQDFQKHANEFFTALVNRIGSTVIKALTYENPLAIFKSETFEFGDTLQEIYVHPAEKKTYDAKSDVSPFKFADTDIEAFYHTLNNENYYERTFERAWIQKAFVSDMAFDEFVDKMFTSLLSSDTLDEYQAVRVYLRNHLRKSLIQTLKGNDKKITVAGTKIDETKQDFVVDFNQSLINLSKRFTIPSRTTFNNPVGVPNMTAIEDQYLVISAEFSTHLDMLLANAFNMDKASVLARTIVVDDFEKFTGEGANNGRKPVAFLISAKSIINKDKLVHMEAIRNPRNMTYNYFYHHHYMTSLSLFENIHFWYVEEA</sequence>
<accession>Q37993</accession>
<gene>
    <name type="primary">9</name>
</gene>
<reference key="1">
    <citation type="journal article" date="1996" name="J. Virol.">
        <title>Analysis of the complete nucleotide sequence and functional organization of the genome of Streptococcus pneumoniae bacteriophage Cp-1.</title>
        <authorList>
            <person name="Martin A.C."/>
            <person name="Lopez R."/>
            <person name="Garcia P."/>
        </authorList>
    </citation>
    <scope>NUCLEOTIDE SEQUENCE [GENOMIC DNA]</scope>
    <scope>PROTEIN SEQUENCE OF 49-57</scope>
</reference>
<dbReference type="EMBL" id="Z47794">
    <property type="protein sequence ID" value="CAA87729.1"/>
    <property type="molecule type" value="Genomic_DNA"/>
</dbReference>
<dbReference type="RefSeq" id="NP_044821.1">
    <property type="nucleotide sequence ID" value="NC_001825.1"/>
</dbReference>
<dbReference type="SMR" id="Q37993"/>
<dbReference type="IntAct" id="Q37993">
    <property type="interactions" value="2"/>
</dbReference>
<dbReference type="KEGG" id="vg:1261238"/>
<dbReference type="OrthoDB" id="29605at10239"/>
<dbReference type="Proteomes" id="UP000009089">
    <property type="component" value="Genome"/>
</dbReference>
<dbReference type="GO" id="GO:0044423">
    <property type="term" value="C:virion component"/>
    <property type="evidence" value="ECO:0007669"/>
    <property type="project" value="UniProtKB-KW"/>
</dbReference>
<organism>
    <name type="scientific">Streptococcus phage Cp-1</name>
    <name type="common">Bacteriophage Cp-1</name>
    <dbReference type="NCBI Taxonomy" id="10747"/>
    <lineage>
        <taxon>Viruses</taxon>
        <taxon>Duplodnaviria</taxon>
        <taxon>Heunggongvirae</taxon>
        <taxon>Uroviricota</taxon>
        <taxon>Caudoviricetes</taxon>
        <taxon>Salasmaviridae</taxon>
        <taxon>Cepunavirus</taxon>
        <taxon>Cepunavirus Cp1</taxon>
    </lineage>
</organism>
<comment type="function">
    <text evidence="2">Assembles to form an icosahedral capsid.</text>
</comment>
<comment type="subcellular location">
    <subcellularLocation>
        <location evidence="2">Virion</location>
    </subcellularLocation>
</comment>
<protein>
    <recommendedName>
        <fullName evidence="2">Major capsid protein</fullName>
    </recommendedName>
    <alternativeName>
        <fullName evidence="2">Gene product 9</fullName>
        <shortName evidence="2">gp9</shortName>
    </alternativeName>
    <alternativeName>
        <fullName evidence="2">Major head protein</fullName>
    </alternativeName>
</protein>
<organismHost>
    <name type="scientific">Streptococcus pneumoniae</name>
    <dbReference type="NCBI Taxonomy" id="1313"/>
</organismHost>
<feature type="propeptide" id="PRO_0000003361" evidence="1">
    <location>
        <begin position="1"/>
        <end position="48"/>
    </location>
</feature>
<feature type="chain" id="PRO_0000003362" description="Major capsid protein">
    <location>
        <begin position="49"/>
        <end position="365"/>
    </location>
</feature>
<keyword id="KW-0903">Direct protein sequencing</keyword>
<keyword id="KW-0426">Late protein</keyword>
<keyword id="KW-1185">Reference proteome</keyword>
<keyword id="KW-0946">Virion</keyword>
<name>CAPSD_BPCP1</name>